<evidence type="ECO:0000255" key="1">
    <source>
        <dbReference type="HAMAP-Rule" id="MF_01345"/>
    </source>
</evidence>
<evidence type="ECO:0000305" key="2"/>
<accession>A3MRW3</accession>
<keyword id="KW-0687">Ribonucleoprotein</keyword>
<keyword id="KW-0689">Ribosomal protein</keyword>
<keyword id="KW-0694">RNA-binding</keyword>
<keyword id="KW-0699">rRNA-binding</keyword>
<proteinExistence type="inferred from homology"/>
<protein>
    <recommendedName>
        <fullName evidence="1">Small ribosomal subunit protein uS17</fullName>
    </recommendedName>
    <alternativeName>
        <fullName evidence="2">30S ribosomal protein S17</fullName>
    </alternativeName>
</protein>
<dbReference type="EMBL" id="CP000548">
    <property type="protein sequence ID" value="ABO04932.1"/>
    <property type="molecule type" value="Genomic_DNA"/>
</dbReference>
<dbReference type="RefSeq" id="WP_004201274.1">
    <property type="nucleotide sequence ID" value="NZ_CP007802.1"/>
</dbReference>
<dbReference type="SMR" id="A3MRW3"/>
<dbReference type="GeneID" id="93061823"/>
<dbReference type="KEGG" id="bmaz:BM44_3032"/>
<dbReference type="KEGG" id="bmn:BMA10247_3487"/>
<dbReference type="PATRIC" id="fig|320389.8.peg.3404"/>
<dbReference type="GO" id="GO:0022627">
    <property type="term" value="C:cytosolic small ribosomal subunit"/>
    <property type="evidence" value="ECO:0007669"/>
    <property type="project" value="TreeGrafter"/>
</dbReference>
<dbReference type="GO" id="GO:0019843">
    <property type="term" value="F:rRNA binding"/>
    <property type="evidence" value="ECO:0007669"/>
    <property type="project" value="UniProtKB-UniRule"/>
</dbReference>
<dbReference type="GO" id="GO:0003735">
    <property type="term" value="F:structural constituent of ribosome"/>
    <property type="evidence" value="ECO:0007669"/>
    <property type="project" value="InterPro"/>
</dbReference>
<dbReference type="GO" id="GO:0006412">
    <property type="term" value="P:translation"/>
    <property type="evidence" value="ECO:0007669"/>
    <property type="project" value="UniProtKB-UniRule"/>
</dbReference>
<dbReference type="CDD" id="cd00364">
    <property type="entry name" value="Ribosomal_uS17"/>
    <property type="match status" value="1"/>
</dbReference>
<dbReference type="Gene3D" id="2.40.50.140">
    <property type="entry name" value="Nucleic acid-binding proteins"/>
    <property type="match status" value="1"/>
</dbReference>
<dbReference type="HAMAP" id="MF_01345_B">
    <property type="entry name" value="Ribosomal_uS17_B"/>
    <property type="match status" value="1"/>
</dbReference>
<dbReference type="InterPro" id="IPR012340">
    <property type="entry name" value="NA-bd_OB-fold"/>
</dbReference>
<dbReference type="InterPro" id="IPR000266">
    <property type="entry name" value="Ribosomal_uS17"/>
</dbReference>
<dbReference type="InterPro" id="IPR019984">
    <property type="entry name" value="Ribosomal_uS17_bact/chlr"/>
</dbReference>
<dbReference type="InterPro" id="IPR019979">
    <property type="entry name" value="Ribosomal_uS17_CS"/>
</dbReference>
<dbReference type="NCBIfam" id="NF004123">
    <property type="entry name" value="PRK05610.1"/>
    <property type="match status" value="1"/>
</dbReference>
<dbReference type="NCBIfam" id="TIGR03635">
    <property type="entry name" value="uS17_bact"/>
    <property type="match status" value="1"/>
</dbReference>
<dbReference type="PANTHER" id="PTHR10744">
    <property type="entry name" value="40S RIBOSOMAL PROTEIN S11 FAMILY MEMBER"/>
    <property type="match status" value="1"/>
</dbReference>
<dbReference type="PANTHER" id="PTHR10744:SF1">
    <property type="entry name" value="SMALL RIBOSOMAL SUBUNIT PROTEIN US17M"/>
    <property type="match status" value="1"/>
</dbReference>
<dbReference type="Pfam" id="PF00366">
    <property type="entry name" value="Ribosomal_S17"/>
    <property type="match status" value="1"/>
</dbReference>
<dbReference type="PRINTS" id="PR00973">
    <property type="entry name" value="RIBOSOMALS17"/>
</dbReference>
<dbReference type="SUPFAM" id="SSF50249">
    <property type="entry name" value="Nucleic acid-binding proteins"/>
    <property type="match status" value="1"/>
</dbReference>
<dbReference type="PROSITE" id="PS00056">
    <property type="entry name" value="RIBOSOMAL_S17"/>
    <property type="match status" value="1"/>
</dbReference>
<reference key="1">
    <citation type="journal article" date="2010" name="Genome Biol. Evol.">
        <title>Continuing evolution of Burkholderia mallei through genome reduction and large-scale rearrangements.</title>
        <authorList>
            <person name="Losada L."/>
            <person name="Ronning C.M."/>
            <person name="DeShazer D."/>
            <person name="Woods D."/>
            <person name="Fedorova N."/>
            <person name="Kim H.S."/>
            <person name="Shabalina S.A."/>
            <person name="Pearson T.R."/>
            <person name="Brinkac L."/>
            <person name="Tan P."/>
            <person name="Nandi T."/>
            <person name="Crabtree J."/>
            <person name="Badger J."/>
            <person name="Beckstrom-Sternberg S."/>
            <person name="Saqib M."/>
            <person name="Schutzer S.E."/>
            <person name="Keim P."/>
            <person name="Nierman W.C."/>
        </authorList>
    </citation>
    <scope>NUCLEOTIDE SEQUENCE [LARGE SCALE GENOMIC DNA]</scope>
    <source>
        <strain>NCTC 10247</strain>
    </source>
</reference>
<organism>
    <name type="scientific">Burkholderia mallei (strain NCTC 10247)</name>
    <dbReference type="NCBI Taxonomy" id="320389"/>
    <lineage>
        <taxon>Bacteria</taxon>
        <taxon>Pseudomonadati</taxon>
        <taxon>Pseudomonadota</taxon>
        <taxon>Betaproteobacteria</taxon>
        <taxon>Burkholderiales</taxon>
        <taxon>Burkholderiaceae</taxon>
        <taxon>Burkholderia</taxon>
        <taxon>pseudomallei group</taxon>
    </lineage>
</organism>
<gene>
    <name evidence="1" type="primary">rpsQ</name>
    <name type="ordered locus">BMA10247_3487</name>
</gene>
<feature type="chain" id="PRO_1000054925" description="Small ribosomal subunit protein uS17">
    <location>
        <begin position="1"/>
        <end position="90"/>
    </location>
</feature>
<comment type="function">
    <text evidence="1">One of the primary rRNA binding proteins, it binds specifically to the 5'-end of 16S ribosomal RNA.</text>
</comment>
<comment type="subunit">
    <text evidence="1">Part of the 30S ribosomal subunit.</text>
</comment>
<comment type="similarity">
    <text evidence="1">Belongs to the universal ribosomal protein uS17 family.</text>
</comment>
<name>RS17_BURM7</name>
<sequence length="90" mass="10249">MNDSVKTSLKRTLVGKVVSNKMDKTVTVLVEHRVKHPIYGKYVVRSKKYHAHDEANTYNEGDLVEIQETRPVSKTKAWAVSRLVEAARVI</sequence>